<evidence type="ECO:0000255" key="1"/>
<evidence type="ECO:0000305" key="2"/>
<dbReference type="EMBL" id="X74276">
    <property type="protein sequence ID" value="CAA52333.1"/>
    <property type="molecule type" value="Genomic_DNA"/>
</dbReference>
<dbReference type="PIR" id="A36961">
    <property type="entry name" value="A36961"/>
</dbReference>
<dbReference type="SMR" id="P36641"/>
<dbReference type="GO" id="GO:0005886">
    <property type="term" value="C:plasma membrane"/>
    <property type="evidence" value="ECO:0007669"/>
    <property type="project" value="UniProtKB-SubCell"/>
</dbReference>
<dbReference type="GO" id="GO:0015628">
    <property type="term" value="P:protein secretion by the type II secretion system"/>
    <property type="evidence" value="ECO:0007669"/>
    <property type="project" value="TreeGrafter"/>
</dbReference>
<dbReference type="FunFam" id="1.20.81.30:FF:000001">
    <property type="entry name" value="Type II secretion system protein F"/>
    <property type="match status" value="2"/>
</dbReference>
<dbReference type="Gene3D" id="1.20.81.30">
    <property type="entry name" value="Type II secretion system (T2SS), domain F"/>
    <property type="match status" value="2"/>
</dbReference>
<dbReference type="InterPro" id="IPR003004">
    <property type="entry name" value="GspF/PilC"/>
</dbReference>
<dbReference type="InterPro" id="IPR001992">
    <property type="entry name" value="T2SS_GspF/T4SS_PilC_CS"/>
</dbReference>
<dbReference type="InterPro" id="IPR018076">
    <property type="entry name" value="T2SS_GspF_dom"/>
</dbReference>
<dbReference type="InterPro" id="IPR042094">
    <property type="entry name" value="T2SS_GspF_sf"/>
</dbReference>
<dbReference type="PANTHER" id="PTHR30012">
    <property type="entry name" value="GENERAL SECRETION PATHWAY PROTEIN"/>
    <property type="match status" value="1"/>
</dbReference>
<dbReference type="PANTHER" id="PTHR30012:SF7">
    <property type="entry name" value="PROTEIN TRANSPORT PROTEIN HOFC HOMOLOG"/>
    <property type="match status" value="1"/>
</dbReference>
<dbReference type="Pfam" id="PF00482">
    <property type="entry name" value="T2SSF"/>
    <property type="match status" value="2"/>
</dbReference>
<dbReference type="PRINTS" id="PR00812">
    <property type="entry name" value="BCTERIALGSPF"/>
</dbReference>
<dbReference type="PROSITE" id="PS00874">
    <property type="entry name" value="T2SP_F"/>
    <property type="match status" value="1"/>
</dbReference>
<accession>P36641</accession>
<name>PILC_PSEPU</name>
<gene>
    <name type="primary">pilC</name>
</gene>
<proteinExistence type="inferred from homology"/>
<organism>
    <name type="scientific">Pseudomonas putida</name>
    <name type="common">Arthrobacter siderocapsulatus</name>
    <dbReference type="NCBI Taxonomy" id="303"/>
    <lineage>
        <taxon>Bacteria</taxon>
        <taxon>Pseudomonadati</taxon>
        <taxon>Pseudomonadota</taxon>
        <taxon>Gammaproteobacteria</taxon>
        <taxon>Pseudomonadales</taxon>
        <taxon>Pseudomonadaceae</taxon>
        <taxon>Pseudomonas</taxon>
    </lineage>
</organism>
<reference key="1">
    <citation type="journal article" date="1994" name="J. Bacteriol.">
        <title>Characterization of type IV pilus genes in plant growth-promoting Pseudomonas putida WCS358.</title>
        <authorList>
            <person name="de Groot A."/>
            <person name="Heijnen I."/>
            <person name="de Cock H."/>
            <person name="Filloux A."/>
            <person name="Tommassen J."/>
        </authorList>
    </citation>
    <scope>NUCLEOTIDE SEQUENCE [GENOMIC DNA]</scope>
    <source>
        <strain>WCS358</strain>
    </source>
</reference>
<comment type="function">
    <text>Involved in the translocation of the type IV pilin (PilA).</text>
</comment>
<comment type="subcellular location">
    <subcellularLocation>
        <location evidence="2">Cell inner membrane</location>
        <topology evidence="2">Multi-pass membrane protein</topology>
    </subcellularLocation>
</comment>
<comment type="similarity">
    <text evidence="2">Belongs to the GSP F family.</text>
</comment>
<feature type="chain" id="PRO_0000207841" description="Type 4 fimbrial assembly protein PilC">
    <location>
        <begin position="1"/>
        <end position="401"/>
    </location>
</feature>
<feature type="transmembrane region" description="Helical" evidence="1">
    <location>
        <begin position="166"/>
        <end position="186"/>
    </location>
</feature>
<feature type="transmembrane region" description="Helical" evidence="1">
    <location>
        <begin position="215"/>
        <end position="235"/>
    </location>
</feature>
<feature type="transmembrane region" description="Helical" evidence="1">
    <location>
        <begin position="375"/>
        <end position="395"/>
    </location>
</feature>
<sequence length="401" mass="43085">MNPSIRLYAWQGTNADGLAVSGQMAGRSPAYVRAGLLRQGILVARLRPAGRAWRWPKRREKTDPAGFSRQLATLLKAGVPLLQAFEVMGRSGCDAAQAALLARLKQDVASGLGLADALQRHPGWFDTLYCNLVRVGEQSGTLDRQLEQLAGMLEQRLALHKKLRKAMIYPLLLLLTGLGVSAVLLLEVIPQFQSLFAGFDAALPAFTQWVIDLSTGLGRHAPVLLVSAVLLAVAARELYRKHRPARLWITQRVLGLPVFGKLLGQAALARFARSLATSYAAGVPLLDALGTVAKASGGELHQQAIQRLRQGMANGQGLNQAMAAEPLFPPLLVQLVAIGESSGTLDQMLEKAASHYEEQVSQALDQLTSLLEPAIVLVLGLLVGGLVVAMYLPIFQLGSLI</sequence>
<keyword id="KW-0997">Cell inner membrane</keyword>
<keyword id="KW-1003">Cell membrane</keyword>
<keyword id="KW-1029">Fimbrium biogenesis</keyword>
<keyword id="KW-0472">Membrane</keyword>
<keyword id="KW-0653">Protein transport</keyword>
<keyword id="KW-0812">Transmembrane</keyword>
<keyword id="KW-1133">Transmembrane helix</keyword>
<keyword id="KW-0813">Transport</keyword>
<protein>
    <recommendedName>
        <fullName>Type 4 fimbrial assembly protein PilC</fullName>
    </recommendedName>
</protein>